<gene>
    <name evidence="1" type="primary">gcvT</name>
    <name type="ordered locus">SeD_A3392</name>
</gene>
<organism>
    <name type="scientific">Salmonella dublin (strain CT_02021853)</name>
    <dbReference type="NCBI Taxonomy" id="439851"/>
    <lineage>
        <taxon>Bacteria</taxon>
        <taxon>Pseudomonadati</taxon>
        <taxon>Pseudomonadota</taxon>
        <taxon>Gammaproteobacteria</taxon>
        <taxon>Enterobacterales</taxon>
        <taxon>Enterobacteriaceae</taxon>
        <taxon>Salmonella</taxon>
    </lineage>
</organism>
<proteinExistence type="inferred from homology"/>
<comment type="function">
    <text evidence="1">The glycine cleavage system catalyzes the degradation of glycine.</text>
</comment>
<comment type="catalytic activity">
    <reaction evidence="1">
        <text>N(6)-[(R)-S(8)-aminomethyldihydrolipoyl]-L-lysyl-[protein] + (6S)-5,6,7,8-tetrahydrofolate = N(6)-[(R)-dihydrolipoyl]-L-lysyl-[protein] + (6R)-5,10-methylene-5,6,7,8-tetrahydrofolate + NH4(+)</text>
        <dbReference type="Rhea" id="RHEA:16945"/>
        <dbReference type="Rhea" id="RHEA-COMP:10475"/>
        <dbReference type="Rhea" id="RHEA-COMP:10492"/>
        <dbReference type="ChEBI" id="CHEBI:15636"/>
        <dbReference type="ChEBI" id="CHEBI:28938"/>
        <dbReference type="ChEBI" id="CHEBI:57453"/>
        <dbReference type="ChEBI" id="CHEBI:83100"/>
        <dbReference type="ChEBI" id="CHEBI:83143"/>
        <dbReference type="EC" id="2.1.2.10"/>
    </reaction>
</comment>
<comment type="subunit">
    <text evidence="1">The glycine cleavage system is composed of four proteins: P, T, L and H.</text>
</comment>
<comment type="similarity">
    <text evidence="1">Belongs to the GcvT family.</text>
</comment>
<feature type="chain" id="PRO_1000114110" description="Aminomethyltransferase">
    <location>
        <begin position="1"/>
        <end position="364"/>
    </location>
</feature>
<sequence length="364" mass="40232">MAQQTPLYEQHTLCGARMVDFHGWMMPLHYGSQLDEHHAVRTDAGMFDVSHMTIVDLHGSRTREFLRYLLANDVAKLTKTGKALYSGMLNASGGVIDDLIIYYFTEDFFRLVVNSATREKDLSWITQHAEPYAIDITVRDDLSLIAVQGPNAQEKAATLFTDEQRHAVEGMKPFFGVQAGDLFIATTGYTGEAGYEIAMPNEKAADFWRALVEAGVKPCGLGARDTLRLEAGMNLYGQEMDEGISPLAANMGWTIAWEPADRDFIGREALEMQREKGHEQLVGLVMTEKGVLRNELPVRFTDAQGNQQEGIITSGTFSPTLGYSIALARVPAGIGETAIVQIRNREMPVKVTKPVFVRNGKAVA</sequence>
<accession>B5FUG8</accession>
<name>GCST_SALDC</name>
<protein>
    <recommendedName>
        <fullName evidence="1">Aminomethyltransferase</fullName>
        <ecNumber evidence="1">2.1.2.10</ecNumber>
    </recommendedName>
    <alternativeName>
        <fullName evidence="1">Glycine cleavage system T protein</fullName>
    </alternativeName>
</protein>
<reference key="1">
    <citation type="journal article" date="2011" name="J. Bacteriol.">
        <title>Comparative genomics of 28 Salmonella enterica isolates: evidence for CRISPR-mediated adaptive sublineage evolution.</title>
        <authorList>
            <person name="Fricke W.F."/>
            <person name="Mammel M.K."/>
            <person name="McDermott P.F."/>
            <person name="Tartera C."/>
            <person name="White D.G."/>
            <person name="Leclerc J.E."/>
            <person name="Ravel J."/>
            <person name="Cebula T.A."/>
        </authorList>
    </citation>
    <scope>NUCLEOTIDE SEQUENCE [LARGE SCALE GENOMIC DNA]</scope>
    <source>
        <strain>CT_02021853</strain>
    </source>
</reference>
<keyword id="KW-0032">Aminotransferase</keyword>
<keyword id="KW-0808">Transferase</keyword>
<dbReference type="EC" id="2.1.2.10" evidence="1"/>
<dbReference type="EMBL" id="CP001144">
    <property type="protein sequence ID" value="ACH77979.1"/>
    <property type="molecule type" value="Genomic_DNA"/>
</dbReference>
<dbReference type="RefSeq" id="WP_000068730.1">
    <property type="nucleotide sequence ID" value="NC_011205.1"/>
</dbReference>
<dbReference type="SMR" id="B5FUG8"/>
<dbReference type="KEGG" id="sed:SeD_A3392"/>
<dbReference type="HOGENOM" id="CLU_007884_10_2_6"/>
<dbReference type="Proteomes" id="UP000008322">
    <property type="component" value="Chromosome"/>
</dbReference>
<dbReference type="GO" id="GO:0005829">
    <property type="term" value="C:cytosol"/>
    <property type="evidence" value="ECO:0007669"/>
    <property type="project" value="TreeGrafter"/>
</dbReference>
<dbReference type="GO" id="GO:0005960">
    <property type="term" value="C:glycine cleavage complex"/>
    <property type="evidence" value="ECO:0007669"/>
    <property type="project" value="InterPro"/>
</dbReference>
<dbReference type="GO" id="GO:0004047">
    <property type="term" value="F:aminomethyltransferase activity"/>
    <property type="evidence" value="ECO:0007669"/>
    <property type="project" value="UniProtKB-UniRule"/>
</dbReference>
<dbReference type="GO" id="GO:0008483">
    <property type="term" value="F:transaminase activity"/>
    <property type="evidence" value="ECO:0007669"/>
    <property type="project" value="UniProtKB-KW"/>
</dbReference>
<dbReference type="GO" id="GO:0019464">
    <property type="term" value="P:glycine decarboxylation via glycine cleavage system"/>
    <property type="evidence" value="ECO:0007669"/>
    <property type="project" value="UniProtKB-UniRule"/>
</dbReference>
<dbReference type="FunFam" id="2.40.30.110:FF:000001">
    <property type="entry name" value="Aminomethyltransferase"/>
    <property type="match status" value="1"/>
</dbReference>
<dbReference type="FunFam" id="3.30.70.1400:FF:000001">
    <property type="entry name" value="Aminomethyltransferase"/>
    <property type="match status" value="1"/>
</dbReference>
<dbReference type="FunFam" id="4.10.1250.10:FF:000001">
    <property type="entry name" value="Aminomethyltransferase"/>
    <property type="match status" value="1"/>
</dbReference>
<dbReference type="Gene3D" id="2.40.30.110">
    <property type="entry name" value="Aminomethyltransferase beta-barrel domains"/>
    <property type="match status" value="1"/>
</dbReference>
<dbReference type="Gene3D" id="3.30.70.1400">
    <property type="entry name" value="Aminomethyltransferase beta-barrel domains"/>
    <property type="match status" value="1"/>
</dbReference>
<dbReference type="Gene3D" id="4.10.1250.10">
    <property type="entry name" value="Aminomethyltransferase fragment"/>
    <property type="match status" value="1"/>
</dbReference>
<dbReference type="Gene3D" id="3.30.1360.120">
    <property type="entry name" value="Probable tRNA modification gtpase trme, domain 1"/>
    <property type="match status" value="1"/>
</dbReference>
<dbReference type="HAMAP" id="MF_00259">
    <property type="entry name" value="GcvT"/>
    <property type="match status" value="1"/>
</dbReference>
<dbReference type="InterPro" id="IPR006223">
    <property type="entry name" value="GCS_T"/>
</dbReference>
<dbReference type="InterPro" id="IPR022903">
    <property type="entry name" value="GCS_T_bac"/>
</dbReference>
<dbReference type="InterPro" id="IPR013977">
    <property type="entry name" value="GCST_C"/>
</dbReference>
<dbReference type="InterPro" id="IPR006222">
    <property type="entry name" value="GCV_T_N"/>
</dbReference>
<dbReference type="InterPro" id="IPR028896">
    <property type="entry name" value="GcvT/YgfZ/DmdA"/>
</dbReference>
<dbReference type="InterPro" id="IPR029043">
    <property type="entry name" value="GcvT/YgfZ_C"/>
</dbReference>
<dbReference type="InterPro" id="IPR027266">
    <property type="entry name" value="TrmE/GcvT_dom1"/>
</dbReference>
<dbReference type="NCBIfam" id="TIGR00528">
    <property type="entry name" value="gcvT"/>
    <property type="match status" value="1"/>
</dbReference>
<dbReference type="NCBIfam" id="NF001567">
    <property type="entry name" value="PRK00389.1"/>
    <property type="match status" value="1"/>
</dbReference>
<dbReference type="PANTHER" id="PTHR43757">
    <property type="entry name" value="AMINOMETHYLTRANSFERASE"/>
    <property type="match status" value="1"/>
</dbReference>
<dbReference type="PANTHER" id="PTHR43757:SF2">
    <property type="entry name" value="AMINOMETHYLTRANSFERASE, MITOCHONDRIAL"/>
    <property type="match status" value="1"/>
</dbReference>
<dbReference type="Pfam" id="PF01571">
    <property type="entry name" value="GCV_T"/>
    <property type="match status" value="1"/>
</dbReference>
<dbReference type="Pfam" id="PF08669">
    <property type="entry name" value="GCV_T_C"/>
    <property type="match status" value="1"/>
</dbReference>
<dbReference type="PIRSF" id="PIRSF006487">
    <property type="entry name" value="GcvT"/>
    <property type="match status" value="1"/>
</dbReference>
<dbReference type="SUPFAM" id="SSF101790">
    <property type="entry name" value="Aminomethyltransferase beta-barrel domain"/>
    <property type="match status" value="1"/>
</dbReference>
<dbReference type="SUPFAM" id="SSF103025">
    <property type="entry name" value="Folate-binding domain"/>
    <property type="match status" value="1"/>
</dbReference>
<evidence type="ECO:0000255" key="1">
    <source>
        <dbReference type="HAMAP-Rule" id="MF_00259"/>
    </source>
</evidence>